<protein>
    <recommendedName>
        <fullName>Dehydration-responsive element-binding protein 1B</fullName>
        <shortName>Protein DREB1B</shortName>
    </recommendedName>
</protein>
<keyword id="KW-0010">Activator</keyword>
<keyword id="KW-0238">DNA-binding</keyword>
<keyword id="KW-0539">Nucleus</keyword>
<keyword id="KW-1185">Reference proteome</keyword>
<keyword id="KW-0346">Stress response</keyword>
<keyword id="KW-0804">Transcription</keyword>
<keyword id="KW-0805">Transcription regulation</keyword>
<proteinExistence type="evidence at transcript level"/>
<gene>
    <name type="primary">DREB1B</name>
    <name type="synonym">ERF31</name>
    <name type="ordered locus">Os09g0522000</name>
    <name type="ordered locus">LOC_Os09g35010</name>
</gene>
<accession>Q3T5N4</accession>
<accession>Q7XJI0</accession>
<accession>Q8LLU8</accession>
<name>DRE1B_ORYSJ</name>
<comment type="function">
    <text evidence="4">Transcriptional activator that binds specifically to the DNA sequence 5'-[AG]CCGAC-3'. Binding to the C-repeat/DRE element mediates high salinity- and dehydration-inducible transcription. Confers resistance to high salt, cold and drought stress.</text>
</comment>
<comment type="subcellular location">
    <subcellularLocation>
        <location evidence="5">Nucleus</location>
    </subcellularLocation>
</comment>
<comment type="induction">
    <text evidence="3">By cold stress.</text>
</comment>
<comment type="similarity">
    <text evidence="5">Belongs to the AP2/ERF transcription factor family. ERF subfamily.</text>
</comment>
<evidence type="ECO:0000255" key="1">
    <source>
        <dbReference type="PROSITE-ProRule" id="PRU00366"/>
    </source>
</evidence>
<evidence type="ECO:0000256" key="2">
    <source>
        <dbReference type="SAM" id="MobiDB-lite"/>
    </source>
</evidence>
<evidence type="ECO:0000269" key="3">
    <source>
    </source>
</evidence>
<evidence type="ECO:0000269" key="4">
    <source>
    </source>
</evidence>
<evidence type="ECO:0000305" key="5"/>
<sequence length="218" mass="23238">MEVEEAAYRTVWSEPPKRPAGRTKFRETRHPVYRGVRRRGGRPGAAGRWVCEVRVPGARGSRLWLGTFATAEAAARAHDAAALALRGRAACLNFADSAWRMPPVPASAALAGARGVRDAVAVAVEAFQRQSAAPSSPAETFANDGDEEEDNKDVLPVAAAEVFDAGAFELDDGFRFGGMDAGSYYASLAQGLLVEPPAAGAWWEDGELAGSDMPLWSY</sequence>
<dbReference type="EMBL" id="AF300972">
    <property type="protein sequence ID" value="AAN02488.1"/>
    <property type="molecule type" value="mRNA"/>
</dbReference>
<dbReference type="EMBL" id="AY319971">
    <property type="protein sequence ID" value="AAP83888.1"/>
    <property type="molecule type" value="Genomic_DNA"/>
</dbReference>
<dbReference type="EMBL" id="AY785894">
    <property type="protein sequence ID" value="AAX28958.1"/>
    <property type="molecule type" value="mRNA"/>
</dbReference>
<dbReference type="EMBL" id="AP008215">
    <property type="protein sequence ID" value="BAF25624.1"/>
    <property type="molecule type" value="Genomic_DNA"/>
</dbReference>
<dbReference type="EMBL" id="AP014965">
    <property type="status" value="NOT_ANNOTATED_CDS"/>
    <property type="molecule type" value="Genomic_DNA"/>
</dbReference>
<dbReference type="RefSeq" id="XP_015610928.1">
    <property type="nucleotide sequence ID" value="XM_015755442.1"/>
</dbReference>
<dbReference type="SMR" id="Q3T5N4"/>
<dbReference type="FunCoup" id="Q3T5N4">
    <property type="interactions" value="3"/>
</dbReference>
<dbReference type="STRING" id="39947.Q3T5N4"/>
<dbReference type="PaxDb" id="39947-Q3T5N4"/>
<dbReference type="EnsemblPlants" id="Os09t0522000-01">
    <property type="protein sequence ID" value="Os09t0522000-01"/>
    <property type="gene ID" value="Os09g0522000"/>
</dbReference>
<dbReference type="Gramene" id="Os09t0522000-01">
    <property type="protein sequence ID" value="Os09t0522000-01"/>
    <property type="gene ID" value="Os09g0522000"/>
</dbReference>
<dbReference type="KEGG" id="dosa:Os09g0522000"/>
<dbReference type="InParanoid" id="Q3T5N4"/>
<dbReference type="OrthoDB" id="676764at2759"/>
<dbReference type="Proteomes" id="UP000000763">
    <property type="component" value="Chromosome 9"/>
</dbReference>
<dbReference type="Proteomes" id="UP000059680">
    <property type="component" value="Chromosome 9"/>
</dbReference>
<dbReference type="GO" id="GO:0005634">
    <property type="term" value="C:nucleus"/>
    <property type="evidence" value="ECO:0007669"/>
    <property type="project" value="UniProtKB-SubCell"/>
</dbReference>
<dbReference type="GO" id="GO:0003677">
    <property type="term" value="F:DNA binding"/>
    <property type="evidence" value="ECO:0007669"/>
    <property type="project" value="UniProtKB-KW"/>
</dbReference>
<dbReference type="GO" id="GO:0003700">
    <property type="term" value="F:DNA-binding transcription factor activity"/>
    <property type="evidence" value="ECO:0007669"/>
    <property type="project" value="InterPro"/>
</dbReference>
<dbReference type="Gene3D" id="3.30.730.10">
    <property type="entry name" value="AP2/ERF domain"/>
    <property type="match status" value="1"/>
</dbReference>
<dbReference type="InterPro" id="IPR001471">
    <property type="entry name" value="AP2/ERF_dom"/>
</dbReference>
<dbReference type="InterPro" id="IPR036955">
    <property type="entry name" value="AP2/ERF_dom_sf"/>
</dbReference>
<dbReference type="InterPro" id="IPR016177">
    <property type="entry name" value="DNA-bd_dom_sf"/>
</dbReference>
<dbReference type="InterPro" id="IPR045277">
    <property type="entry name" value="DRE1A-I"/>
</dbReference>
<dbReference type="PANTHER" id="PTHR31839:SF57">
    <property type="entry name" value="DEHYDRATION-RESPONSIVE ELEMENT-BINDING PROTEIN 1B"/>
    <property type="match status" value="1"/>
</dbReference>
<dbReference type="PANTHER" id="PTHR31839">
    <property type="entry name" value="DEHYDRATION-RESPONSIVE ELEMENT-BINDING PROTEIN 1D"/>
    <property type="match status" value="1"/>
</dbReference>
<dbReference type="Pfam" id="PF00847">
    <property type="entry name" value="AP2"/>
    <property type="match status" value="1"/>
</dbReference>
<dbReference type="PRINTS" id="PR00367">
    <property type="entry name" value="ETHRSPELEMNT"/>
</dbReference>
<dbReference type="SMART" id="SM00380">
    <property type="entry name" value="AP2"/>
    <property type="match status" value="1"/>
</dbReference>
<dbReference type="SUPFAM" id="SSF54171">
    <property type="entry name" value="DNA-binding domain"/>
    <property type="match status" value="1"/>
</dbReference>
<dbReference type="PROSITE" id="PS51032">
    <property type="entry name" value="AP2_ERF"/>
    <property type="match status" value="1"/>
</dbReference>
<reference key="1">
    <citation type="journal article" date="2003" name="Plant J.">
        <title>OsDREB genes in rice, Oryza sativa L., encode transcription activators that function in drought-, high-salt- and cold-responsive gene expression.</title>
        <authorList>
            <person name="Dubouzet J.G."/>
            <person name="Sakuma Y."/>
            <person name="Ito Y."/>
            <person name="Kasuga M."/>
            <person name="Dubouzet E.G."/>
            <person name="Miura S."/>
            <person name="Seki M."/>
            <person name="Shinozaki K."/>
            <person name="Yamaguchi-Shinozaki K."/>
        </authorList>
    </citation>
    <scope>NUCLEOTIDE SEQUENCE [MRNA]</scope>
    <scope>INDUCTION BY COLD</scope>
    <scope>GENE FAMILY</scope>
</reference>
<reference key="2">
    <citation type="submission" date="2003-06" db="EMBL/GenBank/DDBJ databases">
        <authorList>
            <person name="Yao Q."/>
            <person name="Peng R."/>
            <person name="Xiong A."/>
        </authorList>
    </citation>
    <scope>NUCLEOTIDE SEQUENCE [GENOMIC DNA]</scope>
</reference>
<reference key="3">
    <citation type="journal article" date="2005" name="Plant Mol. Biol.">
        <title>Structural, functional, and phylogenetic characterization of a large CBF gene family in barley.</title>
        <authorList>
            <person name="Skinner J.S."/>
            <person name="von Zitzewitz J."/>
            <person name="Szuecs P."/>
            <person name="Marquez-Cedillo L."/>
            <person name="Filichkin T."/>
            <person name="Amundsen K."/>
            <person name="Stockinger E.J."/>
            <person name="Thomashow M.F."/>
            <person name="Chen T.H.H."/>
            <person name="Hayes P.M."/>
        </authorList>
    </citation>
    <scope>NUCLEOTIDE SEQUENCE [MRNA]</scope>
    <scope>GENE FAMILY</scope>
    <source>
        <strain>cv. Nipponbare</strain>
    </source>
</reference>
<reference key="4">
    <citation type="journal article" date="2005" name="Nature">
        <title>The map-based sequence of the rice genome.</title>
        <authorList>
            <consortium name="International rice genome sequencing project (IRGSP)"/>
        </authorList>
    </citation>
    <scope>NUCLEOTIDE SEQUENCE [LARGE SCALE GENOMIC DNA]</scope>
    <source>
        <strain>cv. Nipponbare</strain>
    </source>
</reference>
<reference key="5">
    <citation type="journal article" date="2008" name="Nucleic Acids Res.">
        <title>The rice annotation project database (RAP-DB): 2008 update.</title>
        <authorList>
            <consortium name="The rice annotation project (RAP)"/>
        </authorList>
    </citation>
    <scope>GENOME REANNOTATION</scope>
    <source>
        <strain>cv. Nipponbare</strain>
    </source>
</reference>
<reference key="6">
    <citation type="journal article" date="2013" name="Rice">
        <title>Improvement of the Oryza sativa Nipponbare reference genome using next generation sequence and optical map data.</title>
        <authorList>
            <person name="Kawahara Y."/>
            <person name="de la Bastide M."/>
            <person name="Hamilton J.P."/>
            <person name="Kanamori H."/>
            <person name="McCombie W.R."/>
            <person name="Ouyang S."/>
            <person name="Schwartz D.C."/>
            <person name="Tanaka T."/>
            <person name="Wu J."/>
            <person name="Zhou S."/>
            <person name="Childs K.L."/>
            <person name="Davidson R.M."/>
            <person name="Lin H."/>
            <person name="Quesada-Ocampo L."/>
            <person name="Vaillancourt B."/>
            <person name="Sakai H."/>
            <person name="Lee S.S."/>
            <person name="Kim J."/>
            <person name="Numa H."/>
            <person name="Itoh T."/>
            <person name="Buell C.R."/>
            <person name="Matsumoto T."/>
        </authorList>
    </citation>
    <scope>GENOME REANNOTATION</scope>
    <source>
        <strain>cv. Nipponbare</strain>
    </source>
</reference>
<reference key="7">
    <citation type="journal article" date="2006" name="Plant Cell Physiol.">
        <title>Functional analysis of rice DREB1/CBF-type transcription factors involved in cold-responsive gene expression in transgenic rice.</title>
        <authorList>
            <person name="Ito Y."/>
            <person name="Katsura K."/>
            <person name="Maruyama K."/>
            <person name="Taji T."/>
            <person name="Kobayashi M."/>
            <person name="Seki M."/>
            <person name="Shinozaki K."/>
            <person name="Yamaguchi-Shinozaki K."/>
        </authorList>
    </citation>
    <scope>FUNCTION</scope>
</reference>
<reference key="8">
    <citation type="journal article" date="2006" name="Plant Physiol.">
        <title>Genome-wide analysis of the ERF gene family in Arabidopsis and rice.</title>
        <authorList>
            <person name="Nakano T."/>
            <person name="Suzuki K."/>
            <person name="Fujimura T."/>
            <person name="Shinshi H."/>
        </authorList>
    </citation>
    <scope>GENE FAMILY</scope>
    <scope>NOMENCLATURE</scope>
</reference>
<feature type="chain" id="PRO_0000323040" description="Dehydration-responsive element-binding protein 1B">
    <location>
        <begin position="1"/>
        <end position="218"/>
    </location>
</feature>
<feature type="DNA-binding region" description="AP2/ERF" evidence="1">
    <location>
        <begin position="32"/>
        <end position="95"/>
    </location>
</feature>
<feature type="region of interest" description="Disordered" evidence="2">
    <location>
        <begin position="1"/>
        <end position="26"/>
    </location>
</feature>
<feature type="region of interest" description="Disordered" evidence="2">
    <location>
        <begin position="131"/>
        <end position="151"/>
    </location>
</feature>
<feature type="sequence conflict" description="In Ref. 2; AAP83888." evidence="5" ref="2">
    <original>A</original>
    <variation>G</variation>
    <location>
        <position position="77"/>
    </location>
</feature>
<feature type="sequence conflict" description="In Ref. 1; AAN02488 and 2; AAP83888." evidence="5" ref="1 2">
    <original>S</original>
    <variation>F</variation>
    <location>
        <position position="97"/>
    </location>
</feature>
<feature type="sequence conflict" description="In Ref. 1; AAN02488 and 2; AAP83888." evidence="5" ref="1 2">
    <original>A</original>
    <variation>P</variation>
    <location>
        <position position="119"/>
    </location>
</feature>
<feature type="sequence conflict" description="In Ref. 1; AAN02488 and 2; AAP83888." evidence="5" ref="1 2">
    <original>D</original>
    <variation>A</variation>
    <location>
        <position position="150"/>
    </location>
</feature>
<feature type="sequence conflict" description="In Ref. 2; AAP83888." evidence="5" ref="2">
    <original>D</original>
    <variation>E</variation>
    <location>
        <position position="153"/>
    </location>
</feature>
<feature type="sequence conflict" description="In Ref. 2; AAP83888." evidence="5" ref="2">
    <original>G</original>
    <variation>D</variation>
    <location>
        <position position="210"/>
    </location>
</feature>
<organism>
    <name type="scientific">Oryza sativa subsp. japonica</name>
    <name type="common">Rice</name>
    <dbReference type="NCBI Taxonomy" id="39947"/>
    <lineage>
        <taxon>Eukaryota</taxon>
        <taxon>Viridiplantae</taxon>
        <taxon>Streptophyta</taxon>
        <taxon>Embryophyta</taxon>
        <taxon>Tracheophyta</taxon>
        <taxon>Spermatophyta</taxon>
        <taxon>Magnoliopsida</taxon>
        <taxon>Liliopsida</taxon>
        <taxon>Poales</taxon>
        <taxon>Poaceae</taxon>
        <taxon>BOP clade</taxon>
        <taxon>Oryzoideae</taxon>
        <taxon>Oryzeae</taxon>
        <taxon>Oryzinae</taxon>
        <taxon>Oryza</taxon>
        <taxon>Oryza sativa</taxon>
    </lineage>
</organism>